<evidence type="ECO:0000250" key="1"/>
<evidence type="ECO:0000255" key="2">
    <source>
        <dbReference type="HAMAP-Rule" id="MF_00100"/>
    </source>
</evidence>
<evidence type="ECO:0000256" key="3">
    <source>
        <dbReference type="SAM" id="MobiDB-lite"/>
    </source>
</evidence>
<accession>A7GZZ3</accession>
<name>IF2_CAMC5</name>
<comment type="function">
    <text evidence="2">One of the essential components for the initiation of protein synthesis. Protects formylmethionyl-tRNA from spontaneous hydrolysis and promotes its binding to the 30S ribosomal subunits. Also involved in the hydrolysis of GTP during the formation of the 70S ribosomal complex.</text>
</comment>
<comment type="subcellular location">
    <subcellularLocation>
        <location evidence="2">Cytoplasm</location>
    </subcellularLocation>
</comment>
<comment type="similarity">
    <text evidence="2">Belongs to the TRAFAC class translation factor GTPase superfamily. Classic translation factor GTPase family. IF-2 subfamily.</text>
</comment>
<keyword id="KW-0963">Cytoplasm</keyword>
<keyword id="KW-0342">GTP-binding</keyword>
<keyword id="KW-0396">Initiation factor</keyword>
<keyword id="KW-0547">Nucleotide-binding</keyword>
<keyword id="KW-0648">Protein biosynthesis</keyword>
<keyword id="KW-1185">Reference proteome</keyword>
<feature type="chain" id="PRO_1000008220" description="Translation initiation factor IF-2">
    <location>
        <begin position="1"/>
        <end position="903"/>
    </location>
</feature>
<feature type="domain" description="tr-type G">
    <location>
        <begin position="402"/>
        <end position="569"/>
    </location>
</feature>
<feature type="region of interest" description="Disordered" evidence="3">
    <location>
        <begin position="57"/>
        <end position="171"/>
    </location>
</feature>
<feature type="region of interest" description="Disordered" evidence="3">
    <location>
        <begin position="267"/>
        <end position="318"/>
    </location>
</feature>
<feature type="region of interest" description="G1" evidence="1">
    <location>
        <begin position="411"/>
        <end position="418"/>
    </location>
</feature>
<feature type="region of interest" description="G2" evidence="1">
    <location>
        <begin position="436"/>
        <end position="440"/>
    </location>
</feature>
<feature type="region of interest" description="G3" evidence="1">
    <location>
        <begin position="457"/>
        <end position="460"/>
    </location>
</feature>
<feature type="region of interest" description="G4" evidence="1">
    <location>
        <begin position="511"/>
        <end position="514"/>
    </location>
</feature>
<feature type="region of interest" description="G5" evidence="1">
    <location>
        <begin position="547"/>
        <end position="549"/>
    </location>
</feature>
<feature type="compositionally biased region" description="Basic and acidic residues" evidence="3">
    <location>
        <begin position="69"/>
        <end position="163"/>
    </location>
</feature>
<feature type="compositionally biased region" description="Low complexity" evidence="3">
    <location>
        <begin position="267"/>
        <end position="278"/>
    </location>
</feature>
<feature type="compositionally biased region" description="Basic residues" evidence="3">
    <location>
        <begin position="299"/>
        <end position="308"/>
    </location>
</feature>
<feature type="binding site" evidence="2">
    <location>
        <begin position="411"/>
        <end position="418"/>
    </location>
    <ligand>
        <name>GTP</name>
        <dbReference type="ChEBI" id="CHEBI:37565"/>
    </ligand>
</feature>
<feature type="binding site" evidence="2">
    <location>
        <begin position="457"/>
        <end position="461"/>
    </location>
    <ligand>
        <name>GTP</name>
        <dbReference type="ChEBI" id="CHEBI:37565"/>
    </ligand>
</feature>
<feature type="binding site" evidence="2">
    <location>
        <begin position="511"/>
        <end position="514"/>
    </location>
    <ligand>
        <name>GTP</name>
        <dbReference type="ChEBI" id="CHEBI:37565"/>
    </ligand>
</feature>
<reference key="1">
    <citation type="submission" date="2007-07" db="EMBL/GenBank/DDBJ databases">
        <title>Genome sequence of Campylobacter curvus 525.92 isolated from human feces.</title>
        <authorList>
            <person name="Fouts D.E."/>
            <person name="Mongodin E.F."/>
            <person name="Puiu D."/>
            <person name="Sebastian Y."/>
            <person name="Miller W.G."/>
            <person name="Mandrell R.E."/>
            <person name="Lastovica A.J."/>
            <person name="Nelson K.E."/>
        </authorList>
    </citation>
    <scope>NUCLEOTIDE SEQUENCE [LARGE SCALE GENOMIC DNA]</scope>
    <source>
        <strain>525.92</strain>
    </source>
</reference>
<dbReference type="EMBL" id="CP000767">
    <property type="protein sequence ID" value="EAT99580.2"/>
    <property type="molecule type" value="Genomic_DNA"/>
</dbReference>
<dbReference type="RefSeq" id="WP_011992627.1">
    <property type="nucleotide sequence ID" value="NC_009715.2"/>
</dbReference>
<dbReference type="SMR" id="A7GZZ3"/>
<dbReference type="STRING" id="360105.CCV52592_0355"/>
<dbReference type="KEGG" id="ccv:CCV52592_0355"/>
<dbReference type="HOGENOM" id="CLU_006301_4_1_7"/>
<dbReference type="OrthoDB" id="9811804at2"/>
<dbReference type="Proteomes" id="UP000006380">
    <property type="component" value="Chromosome"/>
</dbReference>
<dbReference type="GO" id="GO:0005829">
    <property type="term" value="C:cytosol"/>
    <property type="evidence" value="ECO:0007669"/>
    <property type="project" value="TreeGrafter"/>
</dbReference>
<dbReference type="GO" id="GO:0005525">
    <property type="term" value="F:GTP binding"/>
    <property type="evidence" value="ECO:0007669"/>
    <property type="project" value="UniProtKB-KW"/>
</dbReference>
<dbReference type="GO" id="GO:0003924">
    <property type="term" value="F:GTPase activity"/>
    <property type="evidence" value="ECO:0007669"/>
    <property type="project" value="UniProtKB-UniRule"/>
</dbReference>
<dbReference type="GO" id="GO:0003743">
    <property type="term" value="F:translation initiation factor activity"/>
    <property type="evidence" value="ECO:0007669"/>
    <property type="project" value="UniProtKB-UniRule"/>
</dbReference>
<dbReference type="CDD" id="cd01887">
    <property type="entry name" value="IF2_eIF5B"/>
    <property type="match status" value="1"/>
</dbReference>
<dbReference type="CDD" id="cd03702">
    <property type="entry name" value="IF2_mtIF2_II"/>
    <property type="match status" value="1"/>
</dbReference>
<dbReference type="CDD" id="cd03692">
    <property type="entry name" value="mtIF2_IVc"/>
    <property type="match status" value="1"/>
</dbReference>
<dbReference type="FunFam" id="2.40.30.10:FF:000008">
    <property type="entry name" value="Translation initiation factor IF-2"/>
    <property type="match status" value="1"/>
</dbReference>
<dbReference type="FunFam" id="2.40.30.10:FF:000054">
    <property type="entry name" value="Translation initiation factor IF-2"/>
    <property type="match status" value="1"/>
</dbReference>
<dbReference type="FunFam" id="3.40.50.10050:FF:000001">
    <property type="entry name" value="Translation initiation factor IF-2"/>
    <property type="match status" value="1"/>
</dbReference>
<dbReference type="FunFam" id="3.40.50.300:FF:000019">
    <property type="entry name" value="Translation initiation factor IF-2"/>
    <property type="match status" value="1"/>
</dbReference>
<dbReference type="Gene3D" id="1.10.10.2480">
    <property type="match status" value="1"/>
</dbReference>
<dbReference type="Gene3D" id="3.40.50.300">
    <property type="entry name" value="P-loop containing nucleotide triphosphate hydrolases"/>
    <property type="match status" value="1"/>
</dbReference>
<dbReference type="Gene3D" id="2.40.30.10">
    <property type="entry name" value="Translation factors"/>
    <property type="match status" value="2"/>
</dbReference>
<dbReference type="Gene3D" id="3.40.50.10050">
    <property type="entry name" value="Translation initiation factor IF- 2, domain 3"/>
    <property type="match status" value="1"/>
</dbReference>
<dbReference type="HAMAP" id="MF_00100_B">
    <property type="entry name" value="IF_2_B"/>
    <property type="match status" value="1"/>
</dbReference>
<dbReference type="InterPro" id="IPR053905">
    <property type="entry name" value="EF-G-like_DII"/>
</dbReference>
<dbReference type="InterPro" id="IPR044145">
    <property type="entry name" value="IF2_II"/>
</dbReference>
<dbReference type="InterPro" id="IPR006847">
    <property type="entry name" value="IF2_N"/>
</dbReference>
<dbReference type="InterPro" id="IPR027417">
    <property type="entry name" value="P-loop_NTPase"/>
</dbReference>
<dbReference type="InterPro" id="IPR005225">
    <property type="entry name" value="Small_GTP-bd"/>
</dbReference>
<dbReference type="InterPro" id="IPR000795">
    <property type="entry name" value="T_Tr_GTP-bd_dom"/>
</dbReference>
<dbReference type="InterPro" id="IPR000178">
    <property type="entry name" value="TF_IF2_bacterial-like"/>
</dbReference>
<dbReference type="InterPro" id="IPR015760">
    <property type="entry name" value="TIF_IF2"/>
</dbReference>
<dbReference type="InterPro" id="IPR023115">
    <property type="entry name" value="TIF_IF2_dom3"/>
</dbReference>
<dbReference type="InterPro" id="IPR036925">
    <property type="entry name" value="TIF_IF2_dom3_sf"/>
</dbReference>
<dbReference type="InterPro" id="IPR009000">
    <property type="entry name" value="Transl_B-barrel_sf"/>
</dbReference>
<dbReference type="NCBIfam" id="TIGR00487">
    <property type="entry name" value="IF-2"/>
    <property type="match status" value="1"/>
</dbReference>
<dbReference type="NCBIfam" id="TIGR00231">
    <property type="entry name" value="small_GTP"/>
    <property type="match status" value="1"/>
</dbReference>
<dbReference type="PANTHER" id="PTHR43381:SF5">
    <property type="entry name" value="TR-TYPE G DOMAIN-CONTAINING PROTEIN"/>
    <property type="match status" value="1"/>
</dbReference>
<dbReference type="PANTHER" id="PTHR43381">
    <property type="entry name" value="TRANSLATION INITIATION FACTOR IF-2-RELATED"/>
    <property type="match status" value="1"/>
</dbReference>
<dbReference type="Pfam" id="PF22042">
    <property type="entry name" value="EF-G_D2"/>
    <property type="match status" value="1"/>
</dbReference>
<dbReference type="Pfam" id="PF00009">
    <property type="entry name" value="GTP_EFTU"/>
    <property type="match status" value="1"/>
</dbReference>
<dbReference type="Pfam" id="PF11987">
    <property type="entry name" value="IF-2"/>
    <property type="match status" value="1"/>
</dbReference>
<dbReference type="Pfam" id="PF04760">
    <property type="entry name" value="IF2_N"/>
    <property type="match status" value="2"/>
</dbReference>
<dbReference type="SUPFAM" id="SSF52156">
    <property type="entry name" value="Initiation factor IF2/eIF5b, domain 3"/>
    <property type="match status" value="1"/>
</dbReference>
<dbReference type="SUPFAM" id="SSF52540">
    <property type="entry name" value="P-loop containing nucleoside triphosphate hydrolases"/>
    <property type="match status" value="1"/>
</dbReference>
<dbReference type="SUPFAM" id="SSF50447">
    <property type="entry name" value="Translation proteins"/>
    <property type="match status" value="2"/>
</dbReference>
<dbReference type="PROSITE" id="PS51722">
    <property type="entry name" value="G_TR_2"/>
    <property type="match status" value="1"/>
</dbReference>
<dbReference type="PROSITE" id="PS01176">
    <property type="entry name" value="IF2"/>
    <property type="match status" value="1"/>
</dbReference>
<gene>
    <name evidence="2" type="primary">infB</name>
    <name type="ordered locus">Ccur92_14810</name>
    <name type="ORF">CCV52592_0355</name>
</gene>
<organism>
    <name type="scientific">Campylobacter curvus (strain 525.92)</name>
    <dbReference type="NCBI Taxonomy" id="360105"/>
    <lineage>
        <taxon>Bacteria</taxon>
        <taxon>Pseudomonadati</taxon>
        <taxon>Campylobacterota</taxon>
        <taxon>Epsilonproteobacteria</taxon>
        <taxon>Campylobacterales</taxon>
        <taxon>Campylobacteraceae</taxon>
        <taxon>Campylobacter</taxon>
    </lineage>
</organism>
<sequence>MSNVRISEIANELGYPSKEIVEKAQELGLKVKTHSNAVSLEEAEAIYEYVQSGVIPEKFKKEKPKAKPKKEAKEPSEKEVGKKQTKAKEEKPAKASTTQKKDTKSHKIGETKAKKDQESVKKQKVEVQPKQEQTKQELQPKEAEFKSEVKDEISEPQKPKESLADVSQRRRGLMIVKKKKEFESAPVRRDENRVKSTDAVEINSLKNMFASSDENLARKKKKDKKPVVATKKDSAQKMDLLGSSDFGDIVIEDEDVVVLPDFSFKTPTPQPMQKTKQPNVLKPTINNTINPFGEGGIQRRARKKHKKPENKQNSEAVTSINIPKEIRVYEFAEKLNKQPSEIIGKLFMLGMMTTKNDFLDEDAIEILADEFNVEVNIIDDQKEFDYVAAYEEEVRDDENLLPRAPVITIMGHVDHGKTSLLDYIRKSRVAAGEAGGITQHVGAYMVNKNGKNITFIDTPGHEAFTAMRARGAGVTDIVIIVVAADDGVKPQTKEAVNHAKAAGVPIIIAINKMDKEAANPDLVKTGLAELDIMPTEWGGKYEFVPISAKTGMGIDDLLEIVLLQAEILELKANPKASAKASVIESSLQKGRGPVATIIVENGTLRVGDTVVAGVAYGKIRSLLDDQGRPLQEIKPGECGVIVGLSEIAEAGETLIGVKTDKEAREYAQKKAEYLRQKELSKSTKVSLDELSAKIAEGELKTLPVIVKADVGGSLEALKASLEKLANNEIKVDIIHSGVGGITQSDVALASASKDCVILGFNIRPTGEIKEKAKESGVEIKTYNVIYNLIDDVKALLGGLMSPIIREEQLGQAQVRQVINVPKIGAIAGCLVTEGTINRGAKIRLIRDGVVVYEGMVSSLKRFKDDVKEVAKGYECGVGIEGCNDIRENDYIESFKEIEEQAKL</sequence>
<proteinExistence type="inferred from homology"/>
<protein>
    <recommendedName>
        <fullName evidence="2">Translation initiation factor IF-2</fullName>
    </recommendedName>
</protein>